<keyword id="KW-0217">Developmental protein</keyword>
<keyword id="KW-0221">Differentiation</keyword>
<keyword id="KW-0539">Nucleus</keyword>
<keyword id="KW-1185">Reference proteome</keyword>
<keyword id="KW-0726">Sexual differentiation</keyword>
<accession>Q27365</accession>
<accession>Q21448</accession>
<name>LI15A_CAEEL</name>
<dbReference type="EMBL" id="U10411">
    <property type="protein sequence ID" value="AAA20087.1"/>
    <property type="molecule type" value="mRNA"/>
</dbReference>
<dbReference type="EMBL" id="U10413">
    <property type="protein sequence ID" value="AAA20090.1"/>
    <property type="molecule type" value="Genomic_DNA"/>
</dbReference>
<dbReference type="EMBL" id="Z29967">
    <property type="protein sequence ID" value="CAA82855.1"/>
    <property type="molecule type" value="Genomic_DNA"/>
</dbReference>
<dbReference type="EMBL" id="Z79605">
    <property type="protein sequence ID" value="CAB01904.1"/>
    <property type="molecule type" value="Genomic_DNA"/>
</dbReference>
<dbReference type="PIR" id="T27977">
    <property type="entry name" value="T27977"/>
</dbReference>
<dbReference type="RefSeq" id="NP_510588.1">
    <property type="nucleotide sequence ID" value="NM_078187.8"/>
</dbReference>
<dbReference type="BioGRID" id="46555">
    <property type="interactions" value="31"/>
</dbReference>
<dbReference type="FunCoup" id="Q27365">
    <property type="interactions" value="305"/>
</dbReference>
<dbReference type="IntAct" id="Q27365">
    <property type="interactions" value="27"/>
</dbReference>
<dbReference type="MINT" id="Q27365"/>
<dbReference type="STRING" id="6239.ZK678.1.2"/>
<dbReference type="iPTMnet" id="Q27365"/>
<dbReference type="PaxDb" id="6239-ZK678.1"/>
<dbReference type="EnsemblMetazoa" id="ZK678.1.1">
    <property type="protein sequence ID" value="ZK678.1.1"/>
    <property type="gene ID" value="WBGene00023498"/>
</dbReference>
<dbReference type="GeneID" id="181663"/>
<dbReference type="KEGG" id="cel:CELE_ZK678.1"/>
<dbReference type="UCSC" id="ZK678.1">
    <property type="organism name" value="c. elegans"/>
</dbReference>
<dbReference type="AGR" id="WB:WBGene00023498"/>
<dbReference type="CTD" id="181663"/>
<dbReference type="WormBase" id="ZK678.1">
    <property type="protein sequence ID" value="CE15383"/>
    <property type="gene ID" value="WBGene00023498"/>
    <property type="gene designation" value="lin-15A"/>
</dbReference>
<dbReference type="eggNOG" id="ENOG502TIKD">
    <property type="taxonomic scope" value="Eukaryota"/>
</dbReference>
<dbReference type="HOGENOM" id="CLU_384620_0_0_1"/>
<dbReference type="InParanoid" id="Q27365"/>
<dbReference type="OrthoDB" id="10687069at2759"/>
<dbReference type="SignaLink" id="Q27365"/>
<dbReference type="PRO" id="PR:Q27365"/>
<dbReference type="Proteomes" id="UP000001940">
    <property type="component" value="Chromosome X"/>
</dbReference>
<dbReference type="Bgee" id="WBGene00023498">
    <property type="expression patterns" value="Expressed in germ line (C elegans) and 4 other cell types or tissues"/>
</dbReference>
<dbReference type="GO" id="GO:0005634">
    <property type="term" value="C:nucleus"/>
    <property type="evidence" value="ECO:0000314"/>
    <property type="project" value="WormBase"/>
</dbReference>
<dbReference type="GO" id="GO:0030154">
    <property type="term" value="P:cell differentiation"/>
    <property type="evidence" value="ECO:0007669"/>
    <property type="project" value="UniProtKB-KW"/>
</dbReference>
<dbReference type="GO" id="GO:0040027">
    <property type="term" value="P:negative regulation of vulval development"/>
    <property type="evidence" value="ECO:0000315"/>
    <property type="project" value="UniProtKB"/>
</dbReference>
<dbReference type="GO" id="GO:0010628">
    <property type="term" value="P:positive regulation of gene expression"/>
    <property type="evidence" value="ECO:0000315"/>
    <property type="project" value="UniProtKB"/>
</dbReference>
<dbReference type="GO" id="GO:0050821">
    <property type="term" value="P:protein stabilization"/>
    <property type="evidence" value="ECO:0000315"/>
    <property type="project" value="UniProtKB"/>
</dbReference>
<dbReference type="GO" id="GO:0042659">
    <property type="term" value="P:regulation of cell fate specification"/>
    <property type="evidence" value="ECO:0000315"/>
    <property type="project" value="WormBase"/>
</dbReference>
<dbReference type="GO" id="GO:0007548">
    <property type="term" value="P:sex differentiation"/>
    <property type="evidence" value="ECO:0007669"/>
    <property type="project" value="UniProtKB-KW"/>
</dbReference>
<dbReference type="GO" id="GO:0040025">
    <property type="term" value="P:vulval development"/>
    <property type="evidence" value="ECO:0000315"/>
    <property type="project" value="UniProtKB"/>
</dbReference>
<dbReference type="Pfam" id="PF25375">
    <property type="entry name" value="Lin-15B"/>
    <property type="match status" value="1"/>
</dbReference>
<comment type="function">
    <text evidence="3 4 5 6">Synthetic multivulva (synMuv) class A protein (PubMed:7982579, PubMed:8054684). SynMuv proteins are required to repress the induction of vulval development (PubMed:7982579, PubMed:8054684). Acts redundantly with SynMuv class B protein lin-15B, and lin-35 to negatively regulate vulval development, most likely through antagonization of the Ras-signaling pathway (PubMed:16624904, PubMed:8054684). May also negatively regulate vulval development in association with other SynMuv class B proteins such as dpl-1 and efl-1 (PubMed:11463372). Regulates let-23 basal activity (PubMed:8054684). Required for the correct expression and/or stability of lin-56 (PubMed:21196525).</text>
</comment>
<comment type="subcellular location">
    <subcellularLocation>
        <location evidence="4">Nucleus</location>
    </subcellularLocation>
</comment>
<comment type="disruption phenotype">
    <text evidence="2 3 4 6">Greatly reduced nuclear accumulation of lin-56 protein and increased mRNA levels (PubMed:21196525). No obvious vulval development defects (PubMed:11463372, PubMed:8054684). Double knockout with the synthetic multivulva class B protein lin-15B, dpl-1, efl-1 or lin-35 results in a multiple vulva (Muv) phenotype (PubMed:11463372, PubMed:16624904, PubMed:8054684).</text>
</comment>
<comment type="miscellaneous">
    <text>The proteins lin-15A and lin-15B are produced from a single precursor mRNA with non-overlapping transcripts where lin-15B is the upstream transcript and lin-15A is the downstream one. The precursor mRNA is cleaved at the polyadenylation site and a 22-nucleotide SL2 leader sequence is trans-spliced to the 5'-end of lin-15A to allow its translation.</text>
</comment>
<feature type="chain" id="PRO_0000260043" description="Protein lin-15A">
    <location>
        <begin position="1"/>
        <end position="719"/>
    </location>
</feature>
<feature type="region of interest" description="Disordered" evidence="1">
    <location>
        <begin position="179"/>
        <end position="199"/>
    </location>
</feature>
<feature type="region of interest" description="Disordered" evidence="1">
    <location>
        <begin position="419"/>
        <end position="464"/>
    </location>
</feature>
<feature type="region of interest" description="Disordered" evidence="1">
    <location>
        <begin position="559"/>
        <end position="626"/>
    </location>
</feature>
<feature type="region of interest" description="Disordered" evidence="1">
    <location>
        <begin position="684"/>
        <end position="719"/>
    </location>
</feature>
<feature type="compositionally biased region" description="Low complexity" evidence="1">
    <location>
        <begin position="570"/>
        <end position="579"/>
    </location>
</feature>
<feature type="compositionally biased region" description="Polar residues" evidence="1">
    <location>
        <begin position="604"/>
        <end position="617"/>
    </location>
</feature>
<feature type="compositionally biased region" description="Basic and acidic residues" evidence="1">
    <location>
        <begin position="693"/>
        <end position="719"/>
    </location>
</feature>
<feature type="sequence conflict" description="In Ref. 2; CAA82855." evidence="7" ref="2">
    <original>KQVAAAPSEPKHIPPTHMEKKPEELLMDPKPEPIF</original>
    <variation>NKWPPHRVSQNIFRQRTWKRSRKSCSWIQSLSQFFKRS</variation>
    <location>
        <begin position="685"/>
        <end position="719"/>
    </location>
</feature>
<proteinExistence type="evidence at transcript level"/>
<evidence type="ECO:0000256" key="1">
    <source>
        <dbReference type="SAM" id="MobiDB-lite"/>
    </source>
</evidence>
<evidence type="ECO:0000269" key="2">
    <source>
    </source>
</evidence>
<evidence type="ECO:0000269" key="3">
    <source>
    </source>
</evidence>
<evidence type="ECO:0000269" key="4">
    <source>
    </source>
</evidence>
<evidence type="ECO:0000269" key="5">
    <source>
    </source>
</evidence>
<evidence type="ECO:0000269" key="6">
    <source>
    </source>
</evidence>
<evidence type="ECO:0000305" key="7"/>
<evidence type="ECO:0000312" key="8">
    <source>
        <dbReference type="EMBL" id="AAA20090.1"/>
    </source>
</evidence>
<evidence type="ECO:0000312" key="9">
    <source>
        <dbReference type="EMBL" id="CAA82855.1"/>
    </source>
</evidence>
<evidence type="ECO:0000312" key="10">
    <source>
        <dbReference type="EMBL" id="CAB01904.1"/>
    </source>
</evidence>
<evidence type="ECO:0000312" key="11">
    <source>
        <dbReference type="WormBase" id="ZK678.1"/>
    </source>
</evidence>
<sequence length="719" mass="80062">MLAPAAPAKDVVSADEKEEIIAKRKFRMKNVDAMRMSSLANDRMAFNKKCNALAMKFVKSAGIGTDALQLTCFQELVRHFNPIAAVVVGVKREPNSNVQAEKKTIPKVKTIQTPTQSMESVRLLQEKKASATEEQSAESASIMKHFANTIPNSTPTQSVKDVLTAAASKGQFKSSAEIFSHFPSEPSPSKPRATREGSQPSDYTYCTYLTPCILCEKALLMRESIAMTDNEAVKVLMAAVMSGHFRMATAEKAIRHERLRMCYDHVDFVYEMMCDAFEAKTESEINEMPPDRLMRGHDIYRALKRVGDLHKGKVTSNTPLYSFKNSIKSYYRNHVPRMVNGSLSKPSPKPFSELVALLQSVPPSTNLNELLNHNLSLSDADKQELIQLINGKDNRFTSRRRKIEDILDNKFAAAAAKAYRDHSEDAPSEPYIPNQSEMQNTVERRKRKLHSPEQDDAGSSSISWNAKKTKTPIDYVHLATRVLEGHSIADEALLHKSKVSYARNAFGEKPSSPTPPSAPLKFCVVNGKKYLRFENGTGPPKVVVQGNVVLRTNTLKDALTTAPRAQNQPSTSTDSSSSSEMEGIRQSFGAPQKEEEEEELVPTLLQNKPTHVESSSPVEKKPPTKTNVEKPAVRLGRMLTTAFGSMSYRTRKSVENKTDLLNQPTSASPRRMIKVVRNRNPHLAKQVAAAPSEPKHIPPTHMEKKPEELLMDPKPEPIF</sequence>
<reference evidence="7 8" key="1">
    <citation type="journal article" date="1994" name="Genetics">
        <title>The Caenorhabditis elegans locus lin-15, a negative regulator of a tyrosine kinase signaling pathway, encodes two different proteins.</title>
        <authorList>
            <person name="Clark S.G."/>
            <person name="Lu X."/>
            <person name="Horvitz H.R."/>
        </authorList>
    </citation>
    <scope>NUCLEOTIDE SEQUENCE [GENOMIC DNA / MRNA]</scope>
    <scope>FUNCTION</scope>
    <source>
        <strain evidence="8">Bristol N2</strain>
    </source>
</reference>
<reference evidence="7 9" key="2">
    <citation type="journal article" date="1994" name="Mol. Biol. Cell">
        <title>The lin-15 locus encodes two negative regulators of Caenorhabditis elegans vulval development.</title>
        <authorList>
            <person name="Huang L.S."/>
            <person name="Tzou P."/>
            <person name="Sternberg P.W."/>
        </authorList>
    </citation>
    <scope>NUCLEOTIDE SEQUENCE [GENOMIC DNA]</scope>
    <scope>FUNCTION</scope>
    <source>
        <strain evidence="9">Bristol N2</strain>
    </source>
</reference>
<reference evidence="10" key="3">
    <citation type="journal article" date="1998" name="Science">
        <title>Genome sequence of the nematode C. elegans: a platform for investigating biology.</title>
        <authorList>
            <consortium name="The C. elegans sequencing consortium"/>
        </authorList>
    </citation>
    <scope>NUCLEOTIDE SEQUENCE [LARGE SCALE GENOMIC DNA]</scope>
    <source>
        <strain>Bristol N2</strain>
    </source>
</reference>
<reference key="4">
    <citation type="journal article" date="2001" name="Mol. Cell">
        <title>dpl-1 DP and efl-1 E2F act with lin-35 Rb to antagonize Ras signaling in C.elegans vulval development.</title>
        <authorList>
            <person name="Ceol C.J."/>
            <person name="Horvitz H.R."/>
        </authorList>
    </citation>
    <scope>FUNCTION</scope>
    <scope>DISRUPTION PHENOTYPE</scope>
</reference>
<reference key="5">
    <citation type="journal article" date="2006" name="Genetics">
        <title>Identification and classification of genes that act antagonistically to let-60 Ras signaling in Caenorhabditis elegans vulval development.</title>
        <authorList>
            <person name="Ceol C.J."/>
            <person name="Stegmeier F."/>
            <person name="Harrison M.M."/>
            <person name="Horvitz H.R."/>
        </authorList>
    </citation>
    <scope>FUNCTION</scope>
    <scope>DISRUPTION PHENOTYPE</scope>
</reference>
<reference key="6">
    <citation type="journal article" date="2011" name="Genetics">
        <title>The LIN-15A and LIN-56 transcriptional regulators interact to negatively regulate EGF/Ras signaling in Caenorhabditis elegans vulval cell-fate determination.</title>
        <authorList>
            <person name="Davison E.M."/>
            <person name="Saffer A.M."/>
            <person name="Huang L.S."/>
            <person name="DeModena J."/>
            <person name="Sternberg P.W."/>
            <person name="Horvitz H.R."/>
        </authorList>
    </citation>
    <scope>FUNCTION</scope>
    <scope>SUBCELLULAR LOCATION</scope>
    <scope>DISRUPTION PHENOTYPE</scope>
</reference>
<organism>
    <name type="scientific">Caenorhabditis elegans</name>
    <dbReference type="NCBI Taxonomy" id="6239"/>
    <lineage>
        <taxon>Eukaryota</taxon>
        <taxon>Metazoa</taxon>
        <taxon>Ecdysozoa</taxon>
        <taxon>Nematoda</taxon>
        <taxon>Chromadorea</taxon>
        <taxon>Rhabditida</taxon>
        <taxon>Rhabditina</taxon>
        <taxon>Rhabditomorpha</taxon>
        <taxon>Rhabditoidea</taxon>
        <taxon>Rhabditidae</taxon>
        <taxon>Peloderinae</taxon>
        <taxon>Caenorhabditis</taxon>
    </lineage>
</organism>
<protein>
    <recommendedName>
        <fullName>Protein lin-15A</fullName>
    </recommendedName>
    <alternativeName>
        <fullName>Abnormal cell lineage protein 15A</fullName>
    </alternativeName>
</protein>
<gene>
    <name evidence="11" type="primary">lin-15A</name>
    <name evidence="11" type="ORF">ZK678.1</name>
</gene>